<organism>
    <name type="scientific">Stylonychia mytilus</name>
    <name type="common">Ciliate</name>
    <dbReference type="NCBI Taxonomy" id="5950"/>
    <lineage>
        <taxon>Eukaryota</taxon>
        <taxon>Sar</taxon>
        <taxon>Alveolata</taxon>
        <taxon>Ciliophora</taxon>
        <taxon>Intramacronucleata</taxon>
        <taxon>Spirotrichea</taxon>
        <taxon>Stichotrichia</taxon>
        <taxon>Sporadotrichida</taxon>
        <taxon>Oxytrichidae</taxon>
        <taxon>Stylonychinae</taxon>
        <taxon>Stylonychia</taxon>
    </lineage>
</organism>
<reference key="1">
    <citation type="journal article" date="1991" name="Nucleic Acids Res.">
        <title>Molecular cloning of telomere-binding protein genes from Stylonychia mytilis.</title>
        <authorList>
            <person name="Fang G."/>
            <person name="Cech T.R."/>
        </authorList>
    </citation>
    <scope>NUCLEOTIDE SEQUENCE [GENOMIC DNA]</scope>
</reference>
<name>TEBA_STYMT</name>
<protein>
    <recommendedName>
        <fullName>Telomere-binding protein subunit alpha</fullName>
    </recommendedName>
</protein>
<evidence type="ECO:0000256" key="1">
    <source>
        <dbReference type="SAM" id="MobiDB-lite"/>
    </source>
</evidence>
<evidence type="ECO:0000305" key="2"/>
<comment type="function">
    <text>May function as protective capping of the single-stranded telomeric overhang. May also participate in telomere length regulation during DNA replication.</text>
</comment>
<comment type="subunit">
    <text>Heterodimer of an alpha and a beta subunit.</text>
</comment>
<comment type="subcellular location">
    <subcellularLocation>
        <location>Nucleus</location>
    </subcellularLocation>
    <subcellularLocation>
        <location>Chromosome</location>
        <location>Telomere</location>
    </subcellularLocation>
</comment>
<comment type="miscellaneous">
    <text>The sequence of STY56V is shown. STY56I differs in only one position.</text>
</comment>
<comment type="similarity">
    <text evidence="2">Belongs to the telombin family.</text>
</comment>
<accession>P29550</accession>
<feature type="chain" id="PRO_0000121736" description="Telomere-binding protein subunit alpha">
    <location>
        <begin position="1"/>
        <end position="493"/>
    </location>
</feature>
<feature type="region of interest" description="Disordered" evidence="1">
    <location>
        <begin position="1"/>
        <end position="30"/>
    </location>
</feature>
<feature type="compositionally biased region" description="Basic residues" evidence="1">
    <location>
        <begin position="7"/>
        <end position="17"/>
    </location>
</feature>
<feature type="sequence variant" description="In STY56I.">
    <original>V</original>
    <variation>I</variation>
    <location>
        <position position="429"/>
    </location>
</feature>
<gene>
    <name type="primary">STY56V</name>
</gene>
<gene>
    <name type="primary">STY56I</name>
</gene>
<sequence length="493" mass="56098">MSSAKRSTSRVSKKKAAPAKDGAPKKREQSTRYKYVELNKASLTSAEAQHFYGVVIDATFPYKTNQERYICSLKVVDPSLYLKSQKGTGDASDYATLVLYAKRFEDLPIIHRIGDIIRVHRATLRLYNGQRQFNANVFYNSSWALFSTDKKSALQEIGGQEPASDLTPFAFSGKNYTFEKSEAALLQNIRKWAVQYFQQYNVISSDMFTPLNKAQAQKGDFDVVAKILQVFELDEYTNELKLKDQSGQVFYTLALKLKFPHLRAGEVVRIRSATYDETSTQKKVLLLSHYSNIVTFVSASKLAKEVKAKVTDDKSVEKAALKQDVSLSAVVLTEVDKKHAGLPTHSLQDLFHNADTDKEISSKDTFRTQFYITRVEPVDVKEWVKSYDRKTKKPSSHKGAGAKGGENIFQVQFLVKDASTQLNNNTYRVLLYTQDGLGANFFNVKPDNLYKNNDARKKLEEYNELLTKFNSYVDAVVERRNGFYFIKDTRIIF</sequence>
<keyword id="KW-0158">Chromosome</keyword>
<keyword id="KW-0238">DNA-binding</keyword>
<keyword id="KW-0539">Nucleus</keyword>
<keyword id="KW-0779">Telomere</keyword>
<proteinExistence type="inferred from homology"/>
<dbReference type="EMBL" id="X61749">
    <property type="protein sequence ID" value="CAA43888.1"/>
    <property type="molecule type" value="Genomic_DNA"/>
</dbReference>
<dbReference type="SMR" id="P29550"/>
<dbReference type="GO" id="GO:0000783">
    <property type="term" value="C:nuclear telomere cap complex"/>
    <property type="evidence" value="ECO:0007669"/>
    <property type="project" value="TreeGrafter"/>
</dbReference>
<dbReference type="GO" id="GO:0098505">
    <property type="term" value="F:G-rich strand telomeric DNA binding"/>
    <property type="evidence" value="ECO:0007669"/>
    <property type="project" value="TreeGrafter"/>
</dbReference>
<dbReference type="GO" id="GO:0010521">
    <property type="term" value="F:telomerase inhibitor activity"/>
    <property type="evidence" value="ECO:0007669"/>
    <property type="project" value="TreeGrafter"/>
</dbReference>
<dbReference type="GO" id="GO:0032210">
    <property type="term" value="P:regulation of telomere maintenance via telomerase"/>
    <property type="evidence" value="ECO:0007669"/>
    <property type="project" value="TreeGrafter"/>
</dbReference>
<dbReference type="GO" id="GO:0016233">
    <property type="term" value="P:telomere capping"/>
    <property type="evidence" value="ECO:0007669"/>
    <property type="project" value="InterPro"/>
</dbReference>
<dbReference type="CDD" id="cd04497">
    <property type="entry name" value="hPOT1_OB1_like"/>
    <property type="match status" value="1"/>
</dbReference>
<dbReference type="FunFam" id="2.40.50.140:FF:000541">
    <property type="entry name" value="Telomere-binding protein subunit alpha"/>
    <property type="match status" value="1"/>
</dbReference>
<dbReference type="Gene3D" id="2.40.50.140">
    <property type="entry name" value="Nucleic acid-binding proteins"/>
    <property type="match status" value="3"/>
</dbReference>
<dbReference type="InterPro" id="IPR012340">
    <property type="entry name" value="NA-bd_OB-fold"/>
</dbReference>
<dbReference type="InterPro" id="IPR028389">
    <property type="entry name" value="POT1"/>
</dbReference>
<dbReference type="InterPro" id="IPR053979">
    <property type="entry name" value="TEBP-like_OB2"/>
</dbReference>
<dbReference type="InterPro" id="IPR011564">
    <property type="entry name" value="Telomer_end-bd_POT1/Cdc13"/>
</dbReference>
<dbReference type="InterPro" id="IPR003415">
    <property type="entry name" value="Telomere-bd_alpha"/>
</dbReference>
<dbReference type="PANTHER" id="PTHR14513">
    <property type="entry name" value="PROTECTION OF TELOMERES 1"/>
    <property type="match status" value="1"/>
</dbReference>
<dbReference type="PANTHER" id="PTHR14513:SF0">
    <property type="entry name" value="PROTECTION OF TELOMERES PROTEIN 1"/>
    <property type="match status" value="1"/>
</dbReference>
<dbReference type="Pfam" id="PF02765">
    <property type="entry name" value="POT1"/>
    <property type="match status" value="2"/>
</dbReference>
<dbReference type="Pfam" id="PF22236">
    <property type="entry name" value="TEBP_OB2-like"/>
    <property type="match status" value="1"/>
</dbReference>
<dbReference type="PIRSF" id="PIRSF015848">
    <property type="entry name" value="TEBP_alpha"/>
    <property type="match status" value="1"/>
</dbReference>
<dbReference type="SMART" id="SM00976">
    <property type="entry name" value="Telo_bind"/>
    <property type="match status" value="1"/>
</dbReference>
<dbReference type="SUPFAM" id="SSF50249">
    <property type="entry name" value="Nucleic acid-binding proteins"/>
    <property type="match status" value="3"/>
</dbReference>